<keyword id="KW-0521">NADP</keyword>
<keyword id="KW-0560">Oxidoreductase</keyword>
<keyword id="KW-1185">Reference proteome</keyword>
<protein>
    <recommendedName>
        <fullName evidence="5">Short-chain dehydrogenase RED1</fullName>
        <ecNumber evidence="7">1.1.1.-</ecNumber>
    </recommendedName>
    <alternativeName>
        <fullName evidence="5">Pyriculol/pyriculariol biosynthesis cluster protein RED1</fullName>
    </alternativeName>
</protein>
<accession>G4N286</accession>
<dbReference type="EC" id="1.1.1.-" evidence="7"/>
<dbReference type="EMBL" id="CM001233">
    <property type="protein sequence ID" value="EHA52498.1"/>
    <property type="molecule type" value="Genomic_DNA"/>
</dbReference>
<dbReference type="RefSeq" id="XP_003712305.1">
    <property type="nucleotide sequence ID" value="XM_003712257.1"/>
</dbReference>
<dbReference type="SMR" id="G4N286"/>
<dbReference type="FunCoup" id="G4N286">
    <property type="interactions" value="248"/>
</dbReference>
<dbReference type="STRING" id="242507.G4N286"/>
<dbReference type="EnsemblFungi" id="MGG_12983T0">
    <property type="protein sequence ID" value="MGG_12983T0"/>
    <property type="gene ID" value="MGG_12983"/>
</dbReference>
<dbReference type="GeneID" id="5048918"/>
<dbReference type="KEGG" id="mgr:MGG_12983"/>
<dbReference type="VEuPathDB" id="FungiDB:MGG_12983"/>
<dbReference type="eggNOG" id="KOG1209">
    <property type="taxonomic scope" value="Eukaryota"/>
</dbReference>
<dbReference type="HOGENOM" id="CLU_010194_2_9_1"/>
<dbReference type="InParanoid" id="G4N286"/>
<dbReference type="OMA" id="FAWRTIW"/>
<dbReference type="OrthoDB" id="2102561at2759"/>
<dbReference type="Proteomes" id="UP000009058">
    <property type="component" value="Chromosome 3"/>
</dbReference>
<dbReference type="GO" id="GO:0005783">
    <property type="term" value="C:endoplasmic reticulum"/>
    <property type="evidence" value="ECO:0007669"/>
    <property type="project" value="TreeGrafter"/>
</dbReference>
<dbReference type="GO" id="GO:0005811">
    <property type="term" value="C:lipid droplet"/>
    <property type="evidence" value="ECO:0007669"/>
    <property type="project" value="TreeGrafter"/>
</dbReference>
<dbReference type="GO" id="GO:0000140">
    <property type="term" value="F:acylglycerone-phosphate reductase (NADP+) activity"/>
    <property type="evidence" value="ECO:0007669"/>
    <property type="project" value="TreeGrafter"/>
</dbReference>
<dbReference type="GO" id="GO:0004806">
    <property type="term" value="F:triacylglycerol lipase activity"/>
    <property type="evidence" value="ECO:0007669"/>
    <property type="project" value="TreeGrafter"/>
</dbReference>
<dbReference type="GO" id="GO:0006654">
    <property type="term" value="P:phosphatidic acid biosynthetic process"/>
    <property type="evidence" value="ECO:0007669"/>
    <property type="project" value="TreeGrafter"/>
</dbReference>
<dbReference type="GO" id="GO:0019433">
    <property type="term" value="P:triglyceride catabolic process"/>
    <property type="evidence" value="ECO:0007669"/>
    <property type="project" value="TreeGrafter"/>
</dbReference>
<dbReference type="CDD" id="cd05374">
    <property type="entry name" value="17beta-HSD-like_SDR_c"/>
    <property type="match status" value="1"/>
</dbReference>
<dbReference type="Gene3D" id="3.40.50.720">
    <property type="entry name" value="NAD(P)-binding Rossmann-like Domain"/>
    <property type="match status" value="1"/>
</dbReference>
<dbReference type="InterPro" id="IPR036291">
    <property type="entry name" value="NAD(P)-bd_dom_sf"/>
</dbReference>
<dbReference type="InterPro" id="IPR020904">
    <property type="entry name" value="Sc_DH/Rdtase_CS"/>
</dbReference>
<dbReference type="InterPro" id="IPR002347">
    <property type="entry name" value="SDR_fam"/>
</dbReference>
<dbReference type="PANTHER" id="PTHR44169">
    <property type="entry name" value="NADPH-DEPENDENT 1-ACYLDIHYDROXYACETONE PHOSPHATE REDUCTASE"/>
    <property type="match status" value="1"/>
</dbReference>
<dbReference type="PANTHER" id="PTHR44169:SF3">
    <property type="entry name" value="SHORT-CHAIN DEHYDROGENASE SRDE"/>
    <property type="match status" value="1"/>
</dbReference>
<dbReference type="Pfam" id="PF00106">
    <property type="entry name" value="adh_short"/>
    <property type="match status" value="1"/>
</dbReference>
<dbReference type="PRINTS" id="PR00081">
    <property type="entry name" value="GDHRDH"/>
</dbReference>
<dbReference type="PRINTS" id="PR00080">
    <property type="entry name" value="SDRFAMILY"/>
</dbReference>
<dbReference type="SUPFAM" id="SSF51735">
    <property type="entry name" value="NAD(P)-binding Rossmann-fold domains"/>
    <property type="match status" value="1"/>
</dbReference>
<dbReference type="PROSITE" id="PS00061">
    <property type="entry name" value="ADH_SHORT"/>
    <property type="match status" value="1"/>
</dbReference>
<sequence length="284" mass="31489">MGPGKEKFALITGCGDGGIGHALANNFVQNGFIVIATLLPHESRTHLEHAKIHVIDLDVTKEDQMIPFRSTLEEITGGTLDVLVNNAGICYTMTAADTDVKQVEKMFAVNVFGPMRLVHHLHRMLIAAPRGVIVNIGSIGGVCPYVFGASYNATKAALHHWGNTLRVEMKPFGVHVVNIISGEVATNILKSDVRDNRTLPEDSVYAPLAQLFKDHVNRTPDAMSPDDYARGVVAMVQRRSLPAWFWHGNATGFIWTLDSFFPRTIWDWLFTRWFKLENLVGTQG</sequence>
<evidence type="ECO:0000250" key="1">
    <source>
        <dbReference type="UniProtKB" id="L0E2Z4"/>
    </source>
</evidence>
<evidence type="ECO:0000250" key="2">
    <source>
        <dbReference type="UniProtKB" id="O93868"/>
    </source>
</evidence>
<evidence type="ECO:0000255" key="3">
    <source>
        <dbReference type="PROSITE-ProRule" id="PRU10001"/>
    </source>
</evidence>
<evidence type="ECO:0000269" key="4">
    <source>
    </source>
</evidence>
<evidence type="ECO:0000303" key="5">
    <source>
    </source>
</evidence>
<evidence type="ECO:0000305" key="6"/>
<evidence type="ECO:0000305" key="7">
    <source>
    </source>
</evidence>
<name>RED1_PYRO7</name>
<comment type="function">
    <text evidence="4 7">Short-chain dehydrogenase; part of the gene cluster that mediates the biosynthesis of pyriculol and pyriculariol, two heptaketides that induce lesion formation upon application on rice leaves but are dispensable for pathogenicity (PubMed:27902426). The highly reducing polyketide synthase synthesizes the heptaketide backbone of pyriculol and pyriculariol (PubMed:27902426). Pyriculol and pyriculariol contain several hydroxyl moieties and double bonds, so it can be assumed that several reduction steps occur during biosynthesis. These reactions could be executed by PKS19 itself or partly by the tailoring enzymes OXR1, OXR2, RED1, RED2 or RED3, identified within the cluster (Probable). The FAD-linked oxidoreductase OXR1 is the only tailoring enzyme for which the function has been determined yet, and is involved in the oxidation of dihydropyriculol and dihydropyriculariol into pyriculol and pyriculariol, respectively (PubMed:27902426).</text>
</comment>
<comment type="pathway">
    <text evidence="7">Polyketide biosynthesis.</text>
</comment>
<comment type="induction">
    <text evidence="4">Expression is increased in rice-extract medium (REM) and is correlated with the production of pyriculol.</text>
</comment>
<comment type="similarity">
    <text evidence="6">Belongs to the short-chain dehydrogenases/reductases (SDR) family.</text>
</comment>
<gene>
    <name evidence="5" type="primary">RED1</name>
    <name type="ORF">MGG_12983</name>
</gene>
<proteinExistence type="evidence at transcript level"/>
<reference key="1">
    <citation type="journal article" date="2005" name="Nature">
        <title>The genome sequence of the rice blast fungus Magnaporthe grisea.</title>
        <authorList>
            <person name="Dean R.A."/>
            <person name="Talbot N.J."/>
            <person name="Ebbole D.J."/>
            <person name="Farman M.L."/>
            <person name="Mitchell T.K."/>
            <person name="Orbach M.J."/>
            <person name="Thon M.R."/>
            <person name="Kulkarni R."/>
            <person name="Xu J.-R."/>
            <person name="Pan H."/>
            <person name="Read N.D."/>
            <person name="Lee Y.-H."/>
            <person name="Carbone I."/>
            <person name="Brown D."/>
            <person name="Oh Y.Y."/>
            <person name="Donofrio N."/>
            <person name="Jeong J.S."/>
            <person name="Soanes D.M."/>
            <person name="Djonovic S."/>
            <person name="Kolomiets E."/>
            <person name="Rehmeyer C."/>
            <person name="Li W."/>
            <person name="Harding M."/>
            <person name="Kim S."/>
            <person name="Lebrun M.-H."/>
            <person name="Bohnert H."/>
            <person name="Coughlan S."/>
            <person name="Butler J."/>
            <person name="Calvo S.E."/>
            <person name="Ma L.-J."/>
            <person name="Nicol R."/>
            <person name="Purcell S."/>
            <person name="Nusbaum C."/>
            <person name="Galagan J.E."/>
            <person name="Birren B.W."/>
        </authorList>
    </citation>
    <scope>NUCLEOTIDE SEQUENCE [LARGE SCALE GENOMIC DNA]</scope>
    <source>
        <strain>70-15 / ATCC MYA-4617 / FGSC 8958</strain>
    </source>
</reference>
<reference key="2">
    <citation type="journal article" date="2017" name="Microbiology">
        <title>Unravelling the biosynthesis of pyriculol in the rice blast fungus Magnaporthe oryzae.</title>
        <authorList>
            <person name="Jacob S."/>
            <person name="Groetsch T."/>
            <person name="Foster A.J."/>
            <person name="Schueffler A."/>
            <person name="Rieger P.H."/>
            <person name="Sandjo L.P."/>
            <person name="Liermann J.C."/>
            <person name="Opatz T."/>
            <person name="Thines E."/>
        </authorList>
    </citation>
    <scope>IDENTIFICATION</scope>
    <scope>INDUCTION</scope>
    <scope>FUNCTION</scope>
    <scope>PATHWAY</scope>
</reference>
<organism>
    <name type="scientific">Pyricularia oryzae (strain 70-15 / ATCC MYA-4617 / FGSC 8958)</name>
    <name type="common">Rice blast fungus</name>
    <name type="synonym">Magnaporthe oryzae</name>
    <dbReference type="NCBI Taxonomy" id="242507"/>
    <lineage>
        <taxon>Eukaryota</taxon>
        <taxon>Fungi</taxon>
        <taxon>Dikarya</taxon>
        <taxon>Ascomycota</taxon>
        <taxon>Pezizomycotina</taxon>
        <taxon>Sordariomycetes</taxon>
        <taxon>Sordariomycetidae</taxon>
        <taxon>Magnaporthales</taxon>
        <taxon>Pyriculariaceae</taxon>
        <taxon>Pyricularia</taxon>
    </lineage>
</organism>
<feature type="chain" id="PRO_0000446268" description="Short-chain dehydrogenase RED1">
    <location>
        <begin position="1"/>
        <end position="284"/>
    </location>
</feature>
<feature type="active site" description="Proton acceptor" evidence="3">
    <location>
        <position position="151"/>
    </location>
</feature>
<feature type="active site" description="Lowers pKa of active site Tyr" evidence="2">
    <location>
        <position position="155"/>
    </location>
</feature>
<feature type="binding site" evidence="1">
    <location>
        <position position="11"/>
    </location>
    <ligand>
        <name>NADP(+)</name>
        <dbReference type="ChEBI" id="CHEBI:58349"/>
    </ligand>
</feature>
<feature type="binding site" evidence="1">
    <location>
        <position position="37"/>
    </location>
    <ligand>
        <name>NADP(+)</name>
        <dbReference type="ChEBI" id="CHEBI:58349"/>
    </ligand>
</feature>
<feature type="binding site" evidence="1">
    <location>
        <position position="58"/>
    </location>
    <ligand>
        <name>NADP(+)</name>
        <dbReference type="ChEBI" id="CHEBI:58349"/>
    </ligand>
</feature>
<feature type="binding site" evidence="2">
    <location>
        <position position="86"/>
    </location>
    <ligand>
        <name>NADP(+)</name>
        <dbReference type="ChEBI" id="CHEBI:58349"/>
    </ligand>
</feature>
<feature type="binding site" evidence="2">
    <location>
        <position position="151"/>
    </location>
    <ligand>
        <name>NADP(+)</name>
        <dbReference type="ChEBI" id="CHEBI:58349"/>
    </ligand>
</feature>
<feature type="binding site" evidence="2">
    <location>
        <position position="155"/>
    </location>
    <ligand>
        <name>NADP(+)</name>
        <dbReference type="ChEBI" id="CHEBI:58349"/>
    </ligand>
</feature>
<feature type="binding site" evidence="2">
    <location>
        <position position="184"/>
    </location>
    <ligand>
        <name>NADP(+)</name>
        <dbReference type="ChEBI" id="CHEBI:58349"/>
    </ligand>
</feature>
<feature type="binding site" evidence="1">
    <location>
        <position position="186"/>
    </location>
    <ligand>
        <name>NADP(+)</name>
        <dbReference type="ChEBI" id="CHEBI:58349"/>
    </ligand>
</feature>